<dbReference type="EMBL" id="CP000576">
    <property type="protein sequence ID" value="ABO17109.1"/>
    <property type="molecule type" value="Genomic_DNA"/>
</dbReference>
<dbReference type="RefSeq" id="WP_011862484.1">
    <property type="nucleotide sequence ID" value="NC_009091.1"/>
</dbReference>
<dbReference type="SMR" id="A3PBI4"/>
<dbReference type="STRING" id="167546.P9301_04861"/>
<dbReference type="KEGG" id="pmg:P9301_04861"/>
<dbReference type="eggNOG" id="COG3258">
    <property type="taxonomic scope" value="Bacteria"/>
</dbReference>
<dbReference type="HOGENOM" id="CLU_033498_0_0_3"/>
<dbReference type="OrthoDB" id="581091at2"/>
<dbReference type="Proteomes" id="UP000001430">
    <property type="component" value="Chromosome"/>
</dbReference>
<dbReference type="GO" id="GO:0031676">
    <property type="term" value="C:plasma membrane-derived thylakoid membrane"/>
    <property type="evidence" value="ECO:0007669"/>
    <property type="project" value="UniProtKB-SubCell"/>
</dbReference>
<dbReference type="GO" id="GO:0009055">
    <property type="term" value="F:electron transfer activity"/>
    <property type="evidence" value="ECO:0007669"/>
    <property type="project" value="UniProtKB-UniRule"/>
</dbReference>
<dbReference type="GO" id="GO:0020037">
    <property type="term" value="F:heme binding"/>
    <property type="evidence" value="ECO:0007669"/>
    <property type="project" value="InterPro"/>
</dbReference>
<dbReference type="GO" id="GO:0005506">
    <property type="term" value="F:iron ion binding"/>
    <property type="evidence" value="ECO:0007669"/>
    <property type="project" value="InterPro"/>
</dbReference>
<dbReference type="GO" id="GO:0015979">
    <property type="term" value="P:photosynthesis"/>
    <property type="evidence" value="ECO:0007669"/>
    <property type="project" value="UniProtKB-UniRule"/>
</dbReference>
<dbReference type="FunFam" id="2.60.40.830:FF:000001">
    <property type="entry name" value="Cytochrome f"/>
    <property type="match status" value="1"/>
</dbReference>
<dbReference type="Gene3D" id="2.40.50.100">
    <property type="match status" value="1"/>
</dbReference>
<dbReference type="Gene3D" id="2.60.40.830">
    <property type="entry name" value="Cytochrome f large domain"/>
    <property type="match status" value="1"/>
</dbReference>
<dbReference type="Gene3D" id="1.20.5.700">
    <property type="entry name" value="Single helix bin"/>
    <property type="match status" value="1"/>
</dbReference>
<dbReference type="HAMAP" id="MF_00610">
    <property type="entry name" value="Cytb6_f_cytF"/>
    <property type="match status" value="1"/>
</dbReference>
<dbReference type="InterPro" id="IPR024058">
    <property type="entry name" value="Cyt-f_TM"/>
</dbReference>
<dbReference type="InterPro" id="IPR002325">
    <property type="entry name" value="Cyt_f"/>
</dbReference>
<dbReference type="InterPro" id="IPR024094">
    <property type="entry name" value="Cyt_f_lg_dom"/>
</dbReference>
<dbReference type="InterPro" id="IPR036826">
    <property type="entry name" value="Cyt_f_lg_dom_sf"/>
</dbReference>
<dbReference type="InterPro" id="IPR011054">
    <property type="entry name" value="Rudment_hybrid_motif"/>
</dbReference>
<dbReference type="NCBIfam" id="NF002736">
    <property type="entry name" value="PRK02693.1"/>
    <property type="match status" value="1"/>
</dbReference>
<dbReference type="PANTHER" id="PTHR33288">
    <property type="match status" value="1"/>
</dbReference>
<dbReference type="PANTHER" id="PTHR33288:SF10">
    <property type="entry name" value="CYTOCHROME F"/>
    <property type="match status" value="1"/>
</dbReference>
<dbReference type="Pfam" id="PF01333">
    <property type="entry name" value="Apocytochr_F_C"/>
    <property type="match status" value="1"/>
</dbReference>
<dbReference type="Pfam" id="PF16639">
    <property type="entry name" value="Apocytochr_F_N"/>
    <property type="match status" value="1"/>
</dbReference>
<dbReference type="PRINTS" id="PR00610">
    <property type="entry name" value="CYTOCHROMEF"/>
</dbReference>
<dbReference type="SUPFAM" id="SSF103431">
    <property type="entry name" value="Cytochrome f subunit of the cytochrome b6f complex, transmembrane anchor"/>
    <property type="match status" value="1"/>
</dbReference>
<dbReference type="SUPFAM" id="SSF49441">
    <property type="entry name" value="Cytochrome f, large domain"/>
    <property type="match status" value="1"/>
</dbReference>
<dbReference type="SUPFAM" id="SSF51246">
    <property type="entry name" value="Rudiment single hybrid motif"/>
    <property type="match status" value="1"/>
</dbReference>
<dbReference type="PROSITE" id="PS51010">
    <property type="entry name" value="CYTF"/>
    <property type="match status" value="1"/>
</dbReference>
<evidence type="ECO:0000255" key="1">
    <source>
        <dbReference type="HAMAP-Rule" id="MF_00610"/>
    </source>
</evidence>
<gene>
    <name evidence="1" type="primary">petA</name>
    <name type="ordered locus">P9301_04861</name>
</gene>
<accession>A3PBI4</accession>
<organism>
    <name type="scientific">Prochlorococcus marinus (strain MIT 9301)</name>
    <dbReference type="NCBI Taxonomy" id="167546"/>
    <lineage>
        <taxon>Bacteria</taxon>
        <taxon>Bacillati</taxon>
        <taxon>Cyanobacteriota</taxon>
        <taxon>Cyanophyceae</taxon>
        <taxon>Synechococcales</taxon>
        <taxon>Prochlorococcaceae</taxon>
        <taxon>Prochlorococcus</taxon>
    </lineage>
</organism>
<comment type="function">
    <text evidence="1">Component of the cytochrome b6-f complex, which mediates electron transfer between photosystem II (PSII) and photosystem I (PSI), cyclic electron flow around PSI, and state transitions.</text>
</comment>
<comment type="cofactor">
    <cofactor evidence="1">
        <name>heme</name>
        <dbReference type="ChEBI" id="CHEBI:30413"/>
    </cofactor>
    <text evidence="1">Binds 1 heme group covalently.</text>
</comment>
<comment type="subunit">
    <text evidence="1">The 4 large subunits of the cytochrome b6-f complex are cytochrome b6, subunit IV (17 kDa polypeptide, PetD), cytochrome f and the Rieske protein, while the 4 small subunits are PetG, PetL, PetM and PetN. The complex functions as a dimer.</text>
</comment>
<comment type="subcellular location">
    <subcellularLocation>
        <location evidence="1">Cellular thylakoid membrane</location>
        <topology evidence="1">Single-pass membrane protein</topology>
    </subcellularLocation>
</comment>
<comment type="similarity">
    <text evidence="1">Belongs to the cytochrome f family.</text>
</comment>
<feature type="signal peptide" evidence="1">
    <location>
        <begin position="1"/>
        <end position="34"/>
    </location>
</feature>
<feature type="chain" id="PRO_0000342031" description="Cytochrome f">
    <location>
        <begin position="35"/>
        <end position="317"/>
    </location>
</feature>
<feature type="transmembrane region" description="Helical" evidence="1">
    <location>
        <begin position="284"/>
        <end position="304"/>
    </location>
</feature>
<feature type="binding site" description="axial binding residue" evidence="1">
    <location>
        <position position="35"/>
    </location>
    <ligand>
        <name>heme</name>
        <dbReference type="ChEBI" id="CHEBI:30413"/>
    </ligand>
    <ligandPart>
        <name>Fe</name>
        <dbReference type="ChEBI" id="CHEBI:18248"/>
    </ligandPart>
</feature>
<feature type="binding site" description="covalent" evidence="1">
    <location>
        <position position="55"/>
    </location>
    <ligand>
        <name>heme</name>
        <dbReference type="ChEBI" id="CHEBI:30413"/>
    </ligand>
</feature>
<feature type="binding site" description="covalent" evidence="1">
    <location>
        <position position="58"/>
    </location>
    <ligand>
        <name>heme</name>
        <dbReference type="ChEBI" id="CHEBI:30413"/>
    </ligand>
</feature>
<feature type="binding site" description="axial binding residue" evidence="1">
    <location>
        <position position="59"/>
    </location>
    <ligand>
        <name>heme</name>
        <dbReference type="ChEBI" id="CHEBI:30413"/>
    </ligand>
    <ligandPart>
        <name>Fe</name>
        <dbReference type="ChEBI" id="CHEBI:18248"/>
    </ligandPart>
</feature>
<reference key="1">
    <citation type="journal article" date="2007" name="PLoS Genet.">
        <title>Patterns and implications of gene gain and loss in the evolution of Prochlorococcus.</title>
        <authorList>
            <person name="Kettler G.C."/>
            <person name="Martiny A.C."/>
            <person name="Huang K."/>
            <person name="Zucker J."/>
            <person name="Coleman M.L."/>
            <person name="Rodrigue S."/>
            <person name="Chen F."/>
            <person name="Lapidus A."/>
            <person name="Ferriera S."/>
            <person name="Johnson J."/>
            <person name="Steglich C."/>
            <person name="Church G.M."/>
            <person name="Richardson P."/>
            <person name="Chisholm S.W."/>
        </authorList>
    </citation>
    <scope>NUCLEOTIDE SEQUENCE [LARGE SCALE GENOMIC DNA]</scope>
    <source>
        <strain>MIT 9301</strain>
    </source>
</reference>
<keyword id="KW-0249">Electron transport</keyword>
<keyword id="KW-0349">Heme</keyword>
<keyword id="KW-0408">Iron</keyword>
<keyword id="KW-0472">Membrane</keyword>
<keyword id="KW-0479">Metal-binding</keyword>
<keyword id="KW-0602">Photosynthesis</keyword>
<keyword id="KW-1185">Reference proteome</keyword>
<keyword id="KW-0732">Signal</keyword>
<keyword id="KW-0793">Thylakoid</keyword>
<keyword id="KW-0812">Transmembrane</keyword>
<keyword id="KW-1133">Transmembrane helix</keyword>
<keyword id="KW-0813">Transport</keyword>
<proteinExistence type="inferred from homology"/>
<name>CYF_PROM0</name>
<sequence length="317" mass="34608">MKGLKNQIMKKTSLFICTLLFISSIVFHPKITFAYPFWAQQNYESPREATGKIVCANCHLAQMPTIAEVPQSVGADSVFKAVVKIPYKNDLKEIGADGSEVPLQVGAVVMLPDGFKLAPQERWTEEIKKETEGVYFTNYSEEKDNIIVVGPLPGDTNKEIVFPVLSPDPSTNKEYHYGKYSLHIGGNRGRGQVYPTGDKSNNVVFTSSSSGTINSIETIEDGSYKVNIEKENGEITTEAVPVGPQLIVKAQDKINAGDPLTNDPNVGGFGQLDAEVVLQSPYRVIGLIAFFIGVGLTQILLVLKKKQVEKVQAAEGI</sequence>
<protein>
    <recommendedName>
        <fullName evidence="1">Cytochrome f</fullName>
    </recommendedName>
</protein>